<proteinExistence type="inferred from homology"/>
<evidence type="ECO:0000255" key="1">
    <source>
        <dbReference type="HAMAP-Rule" id="MF_00161"/>
    </source>
</evidence>
<accession>Q4K5U5</accession>
<keyword id="KW-0064">Aspartyl protease</keyword>
<keyword id="KW-0997">Cell inner membrane</keyword>
<keyword id="KW-1003">Cell membrane</keyword>
<keyword id="KW-0378">Hydrolase</keyword>
<keyword id="KW-0472">Membrane</keyword>
<keyword id="KW-0645">Protease</keyword>
<keyword id="KW-0812">Transmembrane</keyword>
<keyword id="KW-1133">Transmembrane helix</keyword>
<gene>
    <name evidence="1" type="primary">lspA</name>
    <name type="ordered locus">PFL_5320</name>
</gene>
<name>LSPA_PSEF5</name>
<organism>
    <name type="scientific">Pseudomonas fluorescens (strain ATCC BAA-477 / NRRL B-23932 / Pf-5)</name>
    <dbReference type="NCBI Taxonomy" id="220664"/>
    <lineage>
        <taxon>Bacteria</taxon>
        <taxon>Pseudomonadati</taxon>
        <taxon>Pseudomonadota</taxon>
        <taxon>Gammaproteobacteria</taxon>
        <taxon>Pseudomonadales</taxon>
        <taxon>Pseudomonadaceae</taxon>
        <taxon>Pseudomonas</taxon>
    </lineage>
</organism>
<sequence>MPNAAGRFGRLGWLWLSVLVLVIDQVSKLHFESSLSMYQQIVVIPDYFSWTLAYNTGAAFSFLADGSGWQRWLFALIAIAVSAVLVVWLKRLGRNETWLAIALALVLGGALGNLYDRIALGHVIDFILVHWQNRWYFPAFNFADSAITVGAVMLALDMFKSKKTGEAVHD</sequence>
<reference key="1">
    <citation type="journal article" date="2005" name="Nat. Biotechnol.">
        <title>Complete genome sequence of the plant commensal Pseudomonas fluorescens Pf-5.</title>
        <authorList>
            <person name="Paulsen I.T."/>
            <person name="Press C.M."/>
            <person name="Ravel J."/>
            <person name="Kobayashi D.Y."/>
            <person name="Myers G.S.A."/>
            <person name="Mavrodi D.V."/>
            <person name="DeBoy R.T."/>
            <person name="Seshadri R."/>
            <person name="Ren Q."/>
            <person name="Madupu R."/>
            <person name="Dodson R.J."/>
            <person name="Durkin A.S."/>
            <person name="Brinkac L.M."/>
            <person name="Daugherty S.C."/>
            <person name="Sullivan S.A."/>
            <person name="Rosovitz M.J."/>
            <person name="Gwinn M.L."/>
            <person name="Zhou L."/>
            <person name="Schneider D.J."/>
            <person name="Cartinhour S.W."/>
            <person name="Nelson W.C."/>
            <person name="Weidman J."/>
            <person name="Watkins K."/>
            <person name="Tran K."/>
            <person name="Khouri H."/>
            <person name="Pierson E.A."/>
            <person name="Pierson L.S. III"/>
            <person name="Thomashow L.S."/>
            <person name="Loper J.E."/>
        </authorList>
    </citation>
    <scope>NUCLEOTIDE SEQUENCE [LARGE SCALE GENOMIC DNA]</scope>
    <source>
        <strain>ATCC BAA-477 / NRRL B-23932 / Pf-5</strain>
    </source>
</reference>
<comment type="function">
    <text evidence="1">This protein specifically catalyzes the removal of signal peptides from prolipoproteins.</text>
</comment>
<comment type="catalytic activity">
    <reaction evidence="1">
        <text>Release of signal peptides from bacterial membrane prolipoproteins. Hydrolyzes -Xaa-Yaa-Zaa-|-(S,diacylglyceryl)Cys-, in which Xaa is hydrophobic (preferably Leu), and Yaa (Ala or Ser) and Zaa (Gly or Ala) have small, neutral side chains.</text>
        <dbReference type="EC" id="3.4.23.36"/>
    </reaction>
</comment>
<comment type="pathway">
    <text evidence="1">Protein modification; lipoprotein biosynthesis (signal peptide cleavage).</text>
</comment>
<comment type="subcellular location">
    <subcellularLocation>
        <location evidence="1">Cell inner membrane</location>
        <topology evidence="1">Multi-pass membrane protein</topology>
    </subcellularLocation>
</comment>
<comment type="similarity">
    <text evidence="1">Belongs to the peptidase A8 family.</text>
</comment>
<feature type="chain" id="PRO_0000289411" description="Lipoprotein signal peptidase">
    <location>
        <begin position="1"/>
        <end position="170"/>
    </location>
</feature>
<feature type="transmembrane region" description="Helical" evidence="1">
    <location>
        <begin position="11"/>
        <end position="31"/>
    </location>
</feature>
<feature type="transmembrane region" description="Helical" evidence="1">
    <location>
        <begin position="41"/>
        <end position="61"/>
    </location>
</feature>
<feature type="transmembrane region" description="Helical" evidence="1">
    <location>
        <begin position="69"/>
        <end position="89"/>
    </location>
</feature>
<feature type="transmembrane region" description="Helical" evidence="1">
    <location>
        <begin position="95"/>
        <end position="115"/>
    </location>
</feature>
<feature type="transmembrane region" description="Helical" evidence="1">
    <location>
        <begin position="136"/>
        <end position="156"/>
    </location>
</feature>
<feature type="active site" evidence="1">
    <location>
        <position position="125"/>
    </location>
</feature>
<feature type="active site" evidence="1">
    <location>
        <position position="144"/>
    </location>
</feature>
<protein>
    <recommendedName>
        <fullName evidence="1">Lipoprotein signal peptidase</fullName>
        <ecNumber evidence="1">3.4.23.36</ecNumber>
    </recommendedName>
    <alternativeName>
        <fullName evidence="1">Prolipoprotein signal peptidase</fullName>
    </alternativeName>
    <alternativeName>
        <fullName evidence="1">Signal peptidase II</fullName>
        <shortName evidence="1">SPase II</shortName>
    </alternativeName>
</protein>
<dbReference type="EC" id="3.4.23.36" evidence="1"/>
<dbReference type="EMBL" id="CP000076">
    <property type="protein sequence ID" value="AAY94530.1"/>
    <property type="molecule type" value="Genomic_DNA"/>
</dbReference>
<dbReference type="RefSeq" id="WP_011063548.1">
    <property type="nucleotide sequence ID" value="NC_004129.6"/>
</dbReference>
<dbReference type="SMR" id="Q4K5U5"/>
<dbReference type="STRING" id="220664.PFL_5320"/>
<dbReference type="GeneID" id="57478289"/>
<dbReference type="KEGG" id="pfl:PFL_5320"/>
<dbReference type="PATRIC" id="fig|220664.5.peg.5430"/>
<dbReference type="eggNOG" id="COG0597">
    <property type="taxonomic scope" value="Bacteria"/>
</dbReference>
<dbReference type="HOGENOM" id="CLU_083252_4_0_6"/>
<dbReference type="UniPathway" id="UPA00665"/>
<dbReference type="Proteomes" id="UP000008540">
    <property type="component" value="Chromosome"/>
</dbReference>
<dbReference type="GO" id="GO:0005886">
    <property type="term" value="C:plasma membrane"/>
    <property type="evidence" value="ECO:0007669"/>
    <property type="project" value="UniProtKB-SubCell"/>
</dbReference>
<dbReference type="GO" id="GO:0004190">
    <property type="term" value="F:aspartic-type endopeptidase activity"/>
    <property type="evidence" value="ECO:0007669"/>
    <property type="project" value="UniProtKB-UniRule"/>
</dbReference>
<dbReference type="GO" id="GO:0006508">
    <property type="term" value="P:proteolysis"/>
    <property type="evidence" value="ECO:0007669"/>
    <property type="project" value="UniProtKB-KW"/>
</dbReference>
<dbReference type="HAMAP" id="MF_00161">
    <property type="entry name" value="LspA"/>
    <property type="match status" value="1"/>
</dbReference>
<dbReference type="InterPro" id="IPR001872">
    <property type="entry name" value="Peptidase_A8"/>
</dbReference>
<dbReference type="NCBIfam" id="TIGR00077">
    <property type="entry name" value="lspA"/>
    <property type="match status" value="1"/>
</dbReference>
<dbReference type="PANTHER" id="PTHR33695">
    <property type="entry name" value="LIPOPROTEIN SIGNAL PEPTIDASE"/>
    <property type="match status" value="1"/>
</dbReference>
<dbReference type="PANTHER" id="PTHR33695:SF1">
    <property type="entry name" value="LIPOPROTEIN SIGNAL PEPTIDASE"/>
    <property type="match status" value="1"/>
</dbReference>
<dbReference type="Pfam" id="PF01252">
    <property type="entry name" value="Peptidase_A8"/>
    <property type="match status" value="1"/>
</dbReference>
<dbReference type="PRINTS" id="PR00781">
    <property type="entry name" value="LIPOSIGPTASE"/>
</dbReference>
<dbReference type="PROSITE" id="PS00855">
    <property type="entry name" value="SPASE_II"/>
    <property type="match status" value="1"/>
</dbReference>